<keyword id="KW-0130">Cell adhesion</keyword>
<keyword id="KW-1015">Disulfide bond</keyword>
<keyword id="KW-0325">Glycoprotein</keyword>
<keyword id="KW-0472">Membrane</keyword>
<keyword id="KW-0597">Phosphoprotein</keyword>
<keyword id="KW-1185">Reference proteome</keyword>
<keyword id="KW-0735">Signal-anchor</keyword>
<keyword id="KW-0812">Transmembrane</keyword>
<keyword id="KW-1133">Transmembrane helix</keyword>
<accession>P23654</accession>
<accession>A4V209</accession>
<accession>Q9V3F0</accession>
<dbReference type="EMBL" id="X54999">
    <property type="protein sequence ID" value="CAA38746.1"/>
    <property type="molecule type" value="mRNA"/>
</dbReference>
<dbReference type="EMBL" id="X53837">
    <property type="protein sequence ID" value="CAA37831.1"/>
    <property type="molecule type" value="mRNA"/>
</dbReference>
<dbReference type="EMBL" id="AE014296">
    <property type="protein sequence ID" value="AAF49416.1"/>
    <property type="molecule type" value="Genomic_DNA"/>
</dbReference>
<dbReference type="EMBL" id="AE014296">
    <property type="protein sequence ID" value="AAF49417.1"/>
    <property type="molecule type" value="Genomic_DNA"/>
</dbReference>
<dbReference type="EMBL" id="AF132188">
    <property type="protein sequence ID" value="AAD34776.1"/>
    <property type="molecule type" value="mRNA"/>
</dbReference>
<dbReference type="PIR" id="S12005">
    <property type="entry name" value="S12005"/>
</dbReference>
<dbReference type="PIR" id="S13795">
    <property type="entry name" value="S13795"/>
</dbReference>
<dbReference type="RefSeq" id="NP_001189121.1">
    <property type="nucleotide sequence ID" value="NM_001202192.2"/>
</dbReference>
<dbReference type="RefSeq" id="NP_476798.1">
    <property type="nucleotide sequence ID" value="NM_057450.5"/>
</dbReference>
<dbReference type="RefSeq" id="NP_730196.1">
    <property type="nucleotide sequence ID" value="NM_168682.3"/>
</dbReference>
<dbReference type="SMR" id="P23654"/>
<dbReference type="BioGRID" id="65172">
    <property type="interactions" value="17"/>
</dbReference>
<dbReference type="FunCoup" id="P23654">
    <property type="interactions" value="79"/>
</dbReference>
<dbReference type="IntAct" id="P23654">
    <property type="interactions" value="1"/>
</dbReference>
<dbReference type="STRING" id="7227.FBpp0075081"/>
<dbReference type="ESTHER" id="drome-nrtac">
    <property type="family name" value="Neurotactin"/>
</dbReference>
<dbReference type="GlyCosmos" id="P23654">
    <property type="glycosylation" value="6 sites, No reported glycans"/>
</dbReference>
<dbReference type="GlyGen" id="P23654">
    <property type="glycosylation" value="7 sites"/>
</dbReference>
<dbReference type="iPTMnet" id="P23654"/>
<dbReference type="PaxDb" id="7227-FBpp0075081"/>
<dbReference type="DNASU" id="39873"/>
<dbReference type="EnsemblMetazoa" id="FBtr0075322">
    <property type="protein sequence ID" value="FBpp0075081"/>
    <property type="gene ID" value="FBgn0004108"/>
</dbReference>
<dbReference type="EnsemblMetazoa" id="FBtr0075323">
    <property type="protein sequence ID" value="FBpp0075082"/>
    <property type="gene ID" value="FBgn0004108"/>
</dbReference>
<dbReference type="EnsemblMetazoa" id="FBtr0304018">
    <property type="protein sequence ID" value="FBpp0292987"/>
    <property type="gene ID" value="FBgn0004108"/>
</dbReference>
<dbReference type="GeneID" id="39873"/>
<dbReference type="KEGG" id="dme:Dmel_CG9704"/>
<dbReference type="AGR" id="FB:FBgn0004108"/>
<dbReference type="CTD" id="39873"/>
<dbReference type="FlyBase" id="FBgn0004108">
    <property type="gene designation" value="Nrt"/>
</dbReference>
<dbReference type="VEuPathDB" id="VectorBase:FBgn0004108"/>
<dbReference type="eggNOG" id="KOG1516">
    <property type="taxonomic scope" value="Eukaryota"/>
</dbReference>
<dbReference type="HOGENOM" id="CLU_006586_6_0_1"/>
<dbReference type="InParanoid" id="P23654"/>
<dbReference type="OMA" id="LYQHPSE"/>
<dbReference type="OrthoDB" id="408631at2759"/>
<dbReference type="PhylomeDB" id="P23654"/>
<dbReference type="SignaLink" id="P23654"/>
<dbReference type="BioGRID-ORCS" id="39873">
    <property type="hits" value="0 hits in 1 CRISPR screen"/>
</dbReference>
<dbReference type="GenomeRNAi" id="39873"/>
<dbReference type="PRO" id="PR:P23654"/>
<dbReference type="Proteomes" id="UP000000803">
    <property type="component" value="Chromosome 3L"/>
</dbReference>
<dbReference type="Bgee" id="FBgn0004108">
    <property type="expression patterns" value="Expressed in escort cell (Drosophila) in ovary and 216 other cell types or tissues"/>
</dbReference>
<dbReference type="ExpressionAtlas" id="P23654">
    <property type="expression patterns" value="baseline and differential"/>
</dbReference>
<dbReference type="GO" id="GO:0030424">
    <property type="term" value="C:axon"/>
    <property type="evidence" value="ECO:0000314"/>
    <property type="project" value="FlyBase"/>
</dbReference>
<dbReference type="GO" id="GO:0016323">
    <property type="term" value="C:basolateral plasma membrane"/>
    <property type="evidence" value="ECO:0000314"/>
    <property type="project" value="FlyBase"/>
</dbReference>
<dbReference type="GO" id="GO:0005737">
    <property type="term" value="C:cytoplasm"/>
    <property type="evidence" value="ECO:0007005"/>
    <property type="project" value="FlyBase"/>
</dbReference>
<dbReference type="GO" id="GO:0005886">
    <property type="term" value="C:plasma membrane"/>
    <property type="evidence" value="ECO:0000314"/>
    <property type="project" value="FlyBase"/>
</dbReference>
<dbReference type="GO" id="GO:0004895">
    <property type="term" value="F:cell adhesion receptor activity"/>
    <property type="evidence" value="ECO:0000314"/>
    <property type="project" value="FlyBase"/>
</dbReference>
<dbReference type="GO" id="GO:0007411">
    <property type="term" value="P:axon guidance"/>
    <property type="evidence" value="ECO:0000315"/>
    <property type="project" value="FlyBase"/>
</dbReference>
<dbReference type="GO" id="GO:0007413">
    <property type="term" value="P:axonal fasciculation"/>
    <property type="evidence" value="ECO:0000315"/>
    <property type="project" value="FlyBase"/>
</dbReference>
<dbReference type="GO" id="GO:0007409">
    <property type="term" value="P:axonogenesis"/>
    <property type="evidence" value="ECO:0000315"/>
    <property type="project" value="FlyBase"/>
</dbReference>
<dbReference type="GO" id="GO:0007417">
    <property type="term" value="P:central nervous system development"/>
    <property type="evidence" value="ECO:0000316"/>
    <property type="project" value="FlyBase"/>
</dbReference>
<dbReference type="GO" id="GO:0007157">
    <property type="term" value="P:heterophilic cell-cell adhesion via plasma membrane cell adhesion molecules"/>
    <property type="evidence" value="ECO:0000353"/>
    <property type="project" value="FlyBase"/>
</dbReference>
<dbReference type="FunFam" id="3.40.50.1820:FF:000295">
    <property type="entry name" value="neurotactin"/>
    <property type="match status" value="1"/>
</dbReference>
<dbReference type="Gene3D" id="3.40.50.1820">
    <property type="entry name" value="alpha/beta hydrolase"/>
    <property type="match status" value="1"/>
</dbReference>
<dbReference type="InterPro" id="IPR029058">
    <property type="entry name" value="AB_hydrolase_fold"/>
</dbReference>
<dbReference type="InterPro" id="IPR002018">
    <property type="entry name" value="CarbesteraseB"/>
</dbReference>
<dbReference type="InterPro" id="IPR019819">
    <property type="entry name" value="Carboxylesterase_B_CS"/>
</dbReference>
<dbReference type="InterPro" id="IPR050309">
    <property type="entry name" value="Type-B_Carboxylest/Lipase"/>
</dbReference>
<dbReference type="PANTHER" id="PTHR11559">
    <property type="entry name" value="CARBOXYLESTERASE"/>
    <property type="match status" value="1"/>
</dbReference>
<dbReference type="Pfam" id="PF00135">
    <property type="entry name" value="COesterase"/>
    <property type="match status" value="1"/>
</dbReference>
<dbReference type="SUPFAM" id="SSF53474">
    <property type="entry name" value="alpha/beta-Hydrolases"/>
    <property type="match status" value="1"/>
</dbReference>
<dbReference type="PROSITE" id="PS00941">
    <property type="entry name" value="CARBOXYLESTERASE_B_2"/>
    <property type="match status" value="1"/>
</dbReference>
<feature type="chain" id="PRO_0000070297" description="Neurotactin">
    <location>
        <begin position="1"/>
        <end position="846"/>
    </location>
</feature>
<feature type="topological domain" description="Cytoplasmic" evidence="2">
    <location>
        <begin position="1"/>
        <end position="324"/>
    </location>
</feature>
<feature type="transmembrane region" description="Helical; Signal-anchor for type II membrane protein" evidence="2">
    <location>
        <begin position="325"/>
        <end position="346"/>
    </location>
</feature>
<feature type="topological domain" description="Extracellular" evidence="2">
    <location>
        <begin position="347"/>
        <end position="846"/>
    </location>
</feature>
<feature type="region of interest" description="Disordered" evidence="3">
    <location>
        <begin position="1"/>
        <end position="222"/>
    </location>
</feature>
<feature type="compositionally biased region" description="Low complexity" evidence="3">
    <location>
        <begin position="11"/>
        <end position="20"/>
    </location>
</feature>
<feature type="compositionally biased region" description="Basic and acidic residues" evidence="3">
    <location>
        <begin position="23"/>
        <end position="42"/>
    </location>
</feature>
<feature type="compositionally biased region" description="Basic and acidic residues" evidence="3">
    <location>
        <begin position="63"/>
        <end position="74"/>
    </location>
</feature>
<feature type="compositionally biased region" description="Basic and acidic residues" evidence="3">
    <location>
        <begin position="95"/>
        <end position="111"/>
    </location>
</feature>
<feature type="compositionally biased region" description="Basic and acidic residues" evidence="3">
    <location>
        <begin position="141"/>
        <end position="155"/>
    </location>
</feature>
<feature type="compositionally biased region" description="Basic and acidic residues" evidence="3">
    <location>
        <begin position="163"/>
        <end position="178"/>
    </location>
</feature>
<feature type="compositionally biased region" description="Basic and acidic residues" evidence="3">
    <location>
        <begin position="185"/>
        <end position="205"/>
    </location>
</feature>
<feature type="modified residue" description="Phosphothreonine; by PKC" evidence="2">
    <location>
        <position position="28"/>
    </location>
</feature>
<feature type="modified residue" description="Phosphothreonine" evidence="4">
    <location>
        <position position="42"/>
    </location>
</feature>
<feature type="modified residue" description="Phosphoserine" evidence="4">
    <location>
        <position position="44"/>
    </location>
</feature>
<feature type="modified residue" description="Phosphothreonine" evidence="4">
    <location>
        <position position="47"/>
    </location>
</feature>
<feature type="modified residue" description="Phosphoserine" evidence="4">
    <location>
        <position position="48"/>
    </location>
</feature>
<feature type="modified residue" description="Phosphoserine" evidence="4">
    <location>
        <position position="52"/>
    </location>
</feature>
<feature type="modified residue" description="Phosphoserine; by PKC" evidence="2">
    <location>
        <position position="75"/>
    </location>
</feature>
<feature type="modified residue" description="Phosphoserine" evidence="4">
    <location>
        <position position="77"/>
    </location>
</feature>
<feature type="modified residue" description="Phosphoserine; by PKC" evidence="2">
    <location>
        <position position="103"/>
    </location>
</feature>
<feature type="modified residue" description="Phosphoserine; by PKC" evidence="2">
    <location>
        <position position="169"/>
    </location>
</feature>
<feature type="modified residue" description="Phosphoserine" evidence="2">
    <location>
        <position position="186"/>
    </location>
</feature>
<feature type="modified residue" description="Phosphoserine" evidence="4">
    <location>
        <position position="203"/>
    </location>
</feature>
<feature type="modified residue" description="Phosphothreonine" evidence="4">
    <location>
        <position position="206"/>
    </location>
</feature>
<feature type="modified residue" description="Phosphoserine" evidence="4">
    <location>
        <position position="256"/>
    </location>
</feature>
<feature type="modified residue" description="Phosphothreonine" evidence="4">
    <location>
        <position position="259"/>
    </location>
</feature>
<feature type="modified residue" description="Phosphoserine" evidence="4">
    <location>
        <position position="263"/>
    </location>
</feature>
<feature type="modified residue" description="Phosphothreonine" evidence="4">
    <location>
        <position position="269"/>
    </location>
</feature>
<feature type="glycosylation site" description="N-linked (GlcNAc...) asparagine" evidence="2">
    <location>
        <position position="410"/>
    </location>
</feature>
<feature type="glycosylation site" description="N-linked (GlcNAc...) asparagine" evidence="2">
    <location>
        <position position="417"/>
    </location>
</feature>
<feature type="glycosylation site" description="N-linked (GlcNAc...) asparagine" evidence="2">
    <location>
        <position position="428"/>
    </location>
</feature>
<feature type="glycosylation site" description="N-linked (GlcNAc...) asparagine" evidence="2">
    <location>
        <position position="636"/>
    </location>
</feature>
<feature type="glycosylation site" description="N-linked (GlcNAc...) asparagine" evidence="2">
    <location>
        <position position="691"/>
    </location>
</feature>
<feature type="glycosylation site" description="N-linked (GlcNAc...) asparagine" evidence="2">
    <location>
        <position position="720"/>
    </location>
</feature>
<feature type="disulfide bond" evidence="1">
    <location>
        <begin position="422"/>
        <end position="437"/>
    </location>
</feature>
<feature type="disulfide bond" evidence="1">
    <location>
        <begin position="600"/>
        <end position="605"/>
    </location>
</feature>
<feature type="disulfide bond" evidence="1">
    <location>
        <begin position="738"/>
        <end position="830"/>
    </location>
</feature>
<feature type="sequence conflict" description="In Ref. 2; CAA37831." evidence="8" ref="2">
    <original>G</original>
    <variation>S</variation>
    <location>
        <position position="250"/>
    </location>
</feature>
<feature type="sequence conflict" description="In Ref. 1; CAA38746." evidence="8" ref="1">
    <original>T</original>
    <variation>S</variation>
    <location>
        <position position="555"/>
    </location>
</feature>
<feature type="sequence conflict" description="In Ref. 1; CAA38746." evidence="8" ref="1">
    <original>Y</original>
    <variation>F</variation>
    <location>
        <position position="567"/>
    </location>
</feature>
<evidence type="ECO:0000250" key="1"/>
<evidence type="ECO:0000255" key="2"/>
<evidence type="ECO:0000256" key="3">
    <source>
        <dbReference type="SAM" id="MobiDB-lite"/>
    </source>
</evidence>
<evidence type="ECO:0000269" key="4">
    <source>
    </source>
</evidence>
<evidence type="ECO:0000269" key="5">
    <source>
    </source>
</evidence>
<evidence type="ECO:0000269" key="6">
    <source>
    </source>
</evidence>
<evidence type="ECO:0000269" key="7">
    <source>
    </source>
</evidence>
<evidence type="ECO:0000305" key="8"/>
<organism>
    <name type="scientific">Drosophila melanogaster</name>
    <name type="common">Fruit fly</name>
    <dbReference type="NCBI Taxonomy" id="7227"/>
    <lineage>
        <taxon>Eukaryota</taxon>
        <taxon>Metazoa</taxon>
        <taxon>Ecdysozoa</taxon>
        <taxon>Arthropoda</taxon>
        <taxon>Hexapoda</taxon>
        <taxon>Insecta</taxon>
        <taxon>Pterygota</taxon>
        <taxon>Neoptera</taxon>
        <taxon>Endopterygota</taxon>
        <taxon>Diptera</taxon>
        <taxon>Brachycera</taxon>
        <taxon>Muscomorpha</taxon>
        <taxon>Ephydroidea</taxon>
        <taxon>Drosophilidae</taxon>
        <taxon>Drosophila</taxon>
        <taxon>Sophophora</taxon>
    </lineage>
</organism>
<protein>
    <recommendedName>
        <fullName>Neurotactin</fullName>
    </recommendedName>
</protein>
<gene>
    <name type="primary">Nrt</name>
    <name type="ORF">CG9704</name>
</gene>
<proteinExistence type="evidence at protein level"/>
<comment type="function">
    <text evidence="5 6 7">May mediate or modulate cell adhesion between embryonic cells during development.</text>
</comment>
<comment type="subcellular location">
    <subcellularLocation>
        <location evidence="5 6">Membrane</location>
        <topology evidence="5 6">Single-pass type II membrane protein</topology>
    </subcellularLocation>
    <text>Expressed in membranes during embryogenesis.</text>
</comment>
<comment type="tissue specificity">
    <text evidence="5 6 7">Late in embryogenesis, expression is restricted to cells of the peripheral and central nervous system undergoing proliferation and differentiation. Also expressed in larval CNS, mesoderm and imaginal disks.</text>
</comment>
<comment type="developmental stage">
    <text evidence="5 7">Expressed during embryogenesis and larvae.</text>
</comment>
<comment type="similarity">
    <text evidence="8">In the C-terminal section; belongs to the type-B carboxylesterase/lipase family.</text>
</comment>
<sequence>MGELEEKETPPTETTAAQQEALEEPKETDKMLDKKEDAKEKTPSPQTSKPASPNAGKKSSPVAEKKIDDAELAKSKSGNGEEIIDIPAENGTKPDSADDKKISKEEREVKPKKIPIGGLKLPGFFMKNKPKADGDGAEGELLEKEKEEDKDKEANGDAATGSGKDEQKSRPGLGERLRSFFARKPSAEKEKKQLVNGDADAKSEATAEATPAEDASDAPPKRGLLNAIKLPIANMIPKKKSNDDVELGLGKAGLASMETLDDSLKDQDTVDRAPVKTNGTEELKGELKDEKLAAEEKLAAEEEEQNRPVSLLTRLRGYKCSVDDALIVFGILLFVLLLGVIGYVLTHETLTSPPLREGRYIMAVTGCGPVEGVKEDGAFAFRGIPYAKPPVDRLRWKPAELIDDINMCWNDTLQTHNSSVVCTQRLGNGTTVGDEDCLYLDVVTPHVRYNNPLPVVVLIGAESLAGPSPGILRPSARYSRSHDVIFVRPNFRLGVFGFLALDALTKEAHPPTSGNYALTDIIAVLNWIKLNIVHFGGDPQSVTLLGHRAGATLVTLLVNSQKVKGLYTRAWASSGSAILPGKPLSESGKQNEQLMATLECADIQCLREASSERLWAATPDTWLHFPVDLPQPQEANASGSRHEWLVLDGDVVFEHPSDTWKREQANDKPVLVMGATAHEAHTEKLRELHANWTREEVRAYLENSQIGALGLTDEVIEKYNASSYASLVSIISDIRSVCPLLTNARQQPSVPFYVVTQGEGPDQLATVDADVQAILGRYEPHTVEQRRFVSAMQQLFYYYVSHGTVQSFVQNRRVINVGQDAQPEEDYLPCNYWISKDIVPRYARVD</sequence>
<reference key="1">
    <citation type="journal article" date="1990" name="Development">
        <title>Drosophila neurotactin, a surface glycoprotein with homology to serine esterases, is dynamically expressed during embryogenesis.</title>
        <authorList>
            <person name="Hortsch M."/>
            <person name="Patel N.P."/>
            <person name="Bieber A.J."/>
            <person name="Traquina Z.R."/>
            <person name="Goodman C.S."/>
        </authorList>
    </citation>
    <scope>NUCLEOTIDE SEQUENCE [MRNA]</scope>
    <scope>FUNCTION</scope>
    <scope>SUBCELLULAR LOCATION</scope>
    <scope>TISSUE SPECIFICITY</scope>
    <scope>DEVELOPMENTAL STAGE</scope>
    <source>
        <strain>Oregon-R</strain>
        <tissue>Embryo</tissue>
    </source>
</reference>
<reference key="2">
    <citation type="journal article" date="1990" name="EMBO J.">
        <title>Characterization and gene cloning of neurotactin, a Drosophila transmembrane protein related to cholinesterases.</title>
        <authorList>
            <person name="de la Escalera S."/>
            <person name="Bockamp E.O."/>
            <person name="Moya F."/>
            <person name="Piovant M."/>
            <person name="Jimenez F."/>
        </authorList>
    </citation>
    <scope>NUCLEOTIDE SEQUENCE [MRNA]</scope>
    <scope>FUNCTION</scope>
    <scope>SUBCELLULAR LOCATION</scope>
    <scope>TISSUE SPECIFICITY</scope>
    <source>
        <strain>Oregon-R</strain>
        <tissue>Embryo</tissue>
    </source>
</reference>
<reference key="3">
    <citation type="journal article" date="2000" name="Science">
        <title>The genome sequence of Drosophila melanogaster.</title>
        <authorList>
            <person name="Adams M.D."/>
            <person name="Celniker S.E."/>
            <person name="Holt R.A."/>
            <person name="Evans C.A."/>
            <person name="Gocayne J.D."/>
            <person name="Amanatides P.G."/>
            <person name="Scherer S.E."/>
            <person name="Li P.W."/>
            <person name="Hoskins R.A."/>
            <person name="Galle R.F."/>
            <person name="George R.A."/>
            <person name="Lewis S.E."/>
            <person name="Richards S."/>
            <person name="Ashburner M."/>
            <person name="Henderson S.N."/>
            <person name="Sutton G.G."/>
            <person name="Wortman J.R."/>
            <person name="Yandell M.D."/>
            <person name="Zhang Q."/>
            <person name="Chen L.X."/>
            <person name="Brandon R.C."/>
            <person name="Rogers Y.-H.C."/>
            <person name="Blazej R.G."/>
            <person name="Champe M."/>
            <person name="Pfeiffer B.D."/>
            <person name="Wan K.H."/>
            <person name="Doyle C."/>
            <person name="Baxter E.G."/>
            <person name="Helt G."/>
            <person name="Nelson C.R."/>
            <person name="Miklos G.L.G."/>
            <person name="Abril J.F."/>
            <person name="Agbayani A."/>
            <person name="An H.-J."/>
            <person name="Andrews-Pfannkoch C."/>
            <person name="Baldwin D."/>
            <person name="Ballew R.M."/>
            <person name="Basu A."/>
            <person name="Baxendale J."/>
            <person name="Bayraktaroglu L."/>
            <person name="Beasley E.M."/>
            <person name="Beeson K.Y."/>
            <person name="Benos P.V."/>
            <person name="Berman B.P."/>
            <person name="Bhandari D."/>
            <person name="Bolshakov S."/>
            <person name="Borkova D."/>
            <person name="Botchan M.R."/>
            <person name="Bouck J."/>
            <person name="Brokstein P."/>
            <person name="Brottier P."/>
            <person name="Burtis K.C."/>
            <person name="Busam D.A."/>
            <person name="Butler H."/>
            <person name="Cadieu E."/>
            <person name="Center A."/>
            <person name="Chandra I."/>
            <person name="Cherry J.M."/>
            <person name="Cawley S."/>
            <person name="Dahlke C."/>
            <person name="Davenport L.B."/>
            <person name="Davies P."/>
            <person name="de Pablos B."/>
            <person name="Delcher A."/>
            <person name="Deng Z."/>
            <person name="Mays A.D."/>
            <person name="Dew I."/>
            <person name="Dietz S.M."/>
            <person name="Dodson K."/>
            <person name="Doup L.E."/>
            <person name="Downes M."/>
            <person name="Dugan-Rocha S."/>
            <person name="Dunkov B.C."/>
            <person name="Dunn P."/>
            <person name="Durbin K.J."/>
            <person name="Evangelista C.C."/>
            <person name="Ferraz C."/>
            <person name="Ferriera S."/>
            <person name="Fleischmann W."/>
            <person name="Fosler C."/>
            <person name="Gabrielian A.E."/>
            <person name="Garg N.S."/>
            <person name="Gelbart W.M."/>
            <person name="Glasser K."/>
            <person name="Glodek A."/>
            <person name="Gong F."/>
            <person name="Gorrell J.H."/>
            <person name="Gu Z."/>
            <person name="Guan P."/>
            <person name="Harris M."/>
            <person name="Harris N.L."/>
            <person name="Harvey D.A."/>
            <person name="Heiman T.J."/>
            <person name="Hernandez J.R."/>
            <person name="Houck J."/>
            <person name="Hostin D."/>
            <person name="Houston K.A."/>
            <person name="Howland T.J."/>
            <person name="Wei M.-H."/>
            <person name="Ibegwam C."/>
            <person name="Jalali M."/>
            <person name="Kalush F."/>
            <person name="Karpen G.H."/>
            <person name="Ke Z."/>
            <person name="Kennison J.A."/>
            <person name="Ketchum K.A."/>
            <person name="Kimmel B.E."/>
            <person name="Kodira C.D."/>
            <person name="Kraft C.L."/>
            <person name="Kravitz S."/>
            <person name="Kulp D."/>
            <person name="Lai Z."/>
            <person name="Lasko P."/>
            <person name="Lei Y."/>
            <person name="Levitsky A.A."/>
            <person name="Li J.H."/>
            <person name="Li Z."/>
            <person name="Liang Y."/>
            <person name="Lin X."/>
            <person name="Liu X."/>
            <person name="Mattei B."/>
            <person name="McIntosh T.C."/>
            <person name="McLeod M.P."/>
            <person name="McPherson D."/>
            <person name="Merkulov G."/>
            <person name="Milshina N.V."/>
            <person name="Mobarry C."/>
            <person name="Morris J."/>
            <person name="Moshrefi A."/>
            <person name="Mount S.M."/>
            <person name="Moy M."/>
            <person name="Murphy B."/>
            <person name="Murphy L."/>
            <person name="Muzny D.M."/>
            <person name="Nelson D.L."/>
            <person name="Nelson D.R."/>
            <person name="Nelson K.A."/>
            <person name="Nixon K."/>
            <person name="Nusskern D.R."/>
            <person name="Pacleb J.M."/>
            <person name="Palazzolo M."/>
            <person name="Pittman G.S."/>
            <person name="Pan S."/>
            <person name="Pollard J."/>
            <person name="Puri V."/>
            <person name="Reese M.G."/>
            <person name="Reinert K."/>
            <person name="Remington K."/>
            <person name="Saunders R.D.C."/>
            <person name="Scheeler F."/>
            <person name="Shen H."/>
            <person name="Shue B.C."/>
            <person name="Siden-Kiamos I."/>
            <person name="Simpson M."/>
            <person name="Skupski M.P."/>
            <person name="Smith T.J."/>
            <person name="Spier E."/>
            <person name="Spradling A.C."/>
            <person name="Stapleton M."/>
            <person name="Strong R."/>
            <person name="Sun E."/>
            <person name="Svirskas R."/>
            <person name="Tector C."/>
            <person name="Turner R."/>
            <person name="Venter E."/>
            <person name="Wang A.H."/>
            <person name="Wang X."/>
            <person name="Wang Z.-Y."/>
            <person name="Wassarman D.A."/>
            <person name="Weinstock G.M."/>
            <person name="Weissenbach J."/>
            <person name="Williams S.M."/>
            <person name="Woodage T."/>
            <person name="Worley K.C."/>
            <person name="Wu D."/>
            <person name="Yang S."/>
            <person name="Yao Q.A."/>
            <person name="Ye J."/>
            <person name="Yeh R.-F."/>
            <person name="Zaveri J.S."/>
            <person name="Zhan M."/>
            <person name="Zhang G."/>
            <person name="Zhao Q."/>
            <person name="Zheng L."/>
            <person name="Zheng X.H."/>
            <person name="Zhong F.N."/>
            <person name="Zhong W."/>
            <person name="Zhou X."/>
            <person name="Zhu S.C."/>
            <person name="Zhu X."/>
            <person name="Smith H.O."/>
            <person name="Gibbs R.A."/>
            <person name="Myers E.W."/>
            <person name="Rubin G.M."/>
            <person name="Venter J.C."/>
        </authorList>
    </citation>
    <scope>NUCLEOTIDE SEQUENCE [LARGE SCALE GENOMIC DNA]</scope>
    <source>
        <strain>Berkeley</strain>
    </source>
</reference>
<reference key="4">
    <citation type="journal article" date="2002" name="Genome Biol.">
        <title>Annotation of the Drosophila melanogaster euchromatic genome: a systematic review.</title>
        <authorList>
            <person name="Misra S."/>
            <person name="Crosby M.A."/>
            <person name="Mungall C.J."/>
            <person name="Matthews B.B."/>
            <person name="Campbell K.S."/>
            <person name="Hradecky P."/>
            <person name="Huang Y."/>
            <person name="Kaminker J.S."/>
            <person name="Millburn G.H."/>
            <person name="Prochnik S.E."/>
            <person name="Smith C.D."/>
            <person name="Tupy J.L."/>
            <person name="Whitfield E.J."/>
            <person name="Bayraktaroglu L."/>
            <person name="Berman B.P."/>
            <person name="Bettencourt B.R."/>
            <person name="Celniker S.E."/>
            <person name="de Grey A.D.N.J."/>
            <person name="Drysdale R.A."/>
            <person name="Harris N.L."/>
            <person name="Richter J."/>
            <person name="Russo S."/>
            <person name="Schroeder A.J."/>
            <person name="Shu S.Q."/>
            <person name="Stapleton M."/>
            <person name="Yamada C."/>
            <person name="Ashburner M."/>
            <person name="Gelbart W.M."/>
            <person name="Rubin G.M."/>
            <person name="Lewis S.E."/>
        </authorList>
    </citation>
    <scope>GENOME REANNOTATION</scope>
    <source>
        <strain>Berkeley</strain>
    </source>
</reference>
<reference key="5">
    <citation type="journal article" date="2000" name="Science">
        <title>A Drosophila complementary DNA resource.</title>
        <authorList>
            <person name="Rubin G.M."/>
            <person name="Hong L."/>
            <person name="Brokstein P."/>
            <person name="Evans-Holm M."/>
            <person name="Frise E."/>
            <person name="Stapleton M."/>
            <person name="Harvey D.A."/>
        </authorList>
    </citation>
    <scope>NUCLEOTIDE SEQUENCE [LARGE SCALE MRNA]</scope>
    <source>
        <strain>Berkeley</strain>
        <tissue>Embryo</tissue>
    </source>
</reference>
<reference key="6">
    <citation type="journal article" date="1990" name="EMBO J.">
        <title>Drosophila neurotactin mediates heterophilic cell adhesion.</title>
        <authorList>
            <person name="Barthalay Y."/>
            <person name="Hipeau-Jacquotte R."/>
            <person name="de la Escalera S."/>
            <person name="Jimenez F."/>
            <person name="Piovant M."/>
        </authorList>
    </citation>
    <scope>FUNCTION</scope>
    <scope>TISSUE SPECIFICITY</scope>
    <scope>DEVELOPMENTAL STAGE</scope>
</reference>
<reference key="7">
    <citation type="journal article" date="2008" name="J. Proteome Res.">
        <title>Phosphoproteome analysis of Drosophila melanogaster embryos.</title>
        <authorList>
            <person name="Zhai B."/>
            <person name="Villen J."/>
            <person name="Beausoleil S.A."/>
            <person name="Mintseris J."/>
            <person name="Gygi S.P."/>
        </authorList>
    </citation>
    <scope>PHOSPHORYLATION [LARGE SCALE ANALYSIS] AT THR-42; SER-44; THR-47; SER-48; SER-52; SER-77; SER-203; THR-206; SER-256; THR-259; SER-263 AND THR-269</scope>
    <scope>IDENTIFICATION BY MASS SPECTROMETRY</scope>
    <source>
        <tissue>Embryo</tissue>
    </source>
</reference>
<name>NRT_DROME</name>